<gene>
    <name evidence="1" type="primary">hfq</name>
    <name type="ordered locus">Smal_1471</name>
</gene>
<comment type="function">
    <text evidence="1">RNA chaperone that binds small regulatory RNA (sRNAs) and mRNAs to facilitate mRNA translational regulation in response to envelope stress, environmental stress and changes in metabolite concentrations. Also binds with high specificity to tRNAs.</text>
</comment>
<comment type="subunit">
    <text evidence="1">Homohexamer.</text>
</comment>
<comment type="similarity">
    <text evidence="1">Belongs to the Hfq family.</text>
</comment>
<organism>
    <name type="scientific">Stenotrophomonas maltophilia (strain R551-3)</name>
    <dbReference type="NCBI Taxonomy" id="391008"/>
    <lineage>
        <taxon>Bacteria</taxon>
        <taxon>Pseudomonadati</taxon>
        <taxon>Pseudomonadota</taxon>
        <taxon>Gammaproteobacteria</taxon>
        <taxon>Lysobacterales</taxon>
        <taxon>Lysobacteraceae</taxon>
        <taxon>Stenotrophomonas</taxon>
        <taxon>Stenotrophomonas maltophilia group</taxon>
    </lineage>
</organism>
<keyword id="KW-0694">RNA-binding</keyword>
<keyword id="KW-0346">Stress response</keyword>
<dbReference type="EMBL" id="CP001111">
    <property type="protein sequence ID" value="ACF51176.1"/>
    <property type="molecule type" value="Genomic_DNA"/>
</dbReference>
<dbReference type="RefSeq" id="WP_004152891.1">
    <property type="nucleotide sequence ID" value="NC_011071.1"/>
</dbReference>
<dbReference type="SMR" id="B4SRA5"/>
<dbReference type="STRING" id="391008.Smal_1471"/>
<dbReference type="GeneID" id="97260645"/>
<dbReference type="KEGG" id="smt:Smal_1471"/>
<dbReference type="eggNOG" id="COG1923">
    <property type="taxonomic scope" value="Bacteria"/>
</dbReference>
<dbReference type="HOGENOM" id="CLU_113688_2_0_6"/>
<dbReference type="OrthoDB" id="9799751at2"/>
<dbReference type="Proteomes" id="UP000001867">
    <property type="component" value="Chromosome"/>
</dbReference>
<dbReference type="GO" id="GO:0005829">
    <property type="term" value="C:cytosol"/>
    <property type="evidence" value="ECO:0007669"/>
    <property type="project" value="TreeGrafter"/>
</dbReference>
<dbReference type="GO" id="GO:0003723">
    <property type="term" value="F:RNA binding"/>
    <property type="evidence" value="ECO:0007669"/>
    <property type="project" value="UniProtKB-UniRule"/>
</dbReference>
<dbReference type="GO" id="GO:0006355">
    <property type="term" value="P:regulation of DNA-templated transcription"/>
    <property type="evidence" value="ECO:0007669"/>
    <property type="project" value="InterPro"/>
</dbReference>
<dbReference type="GO" id="GO:0043487">
    <property type="term" value="P:regulation of RNA stability"/>
    <property type="evidence" value="ECO:0007669"/>
    <property type="project" value="TreeGrafter"/>
</dbReference>
<dbReference type="GO" id="GO:0045974">
    <property type="term" value="P:regulation of translation, ncRNA-mediated"/>
    <property type="evidence" value="ECO:0007669"/>
    <property type="project" value="TreeGrafter"/>
</dbReference>
<dbReference type="CDD" id="cd01716">
    <property type="entry name" value="Hfq"/>
    <property type="match status" value="1"/>
</dbReference>
<dbReference type="FunFam" id="2.30.30.100:FF:000001">
    <property type="entry name" value="RNA-binding protein Hfq"/>
    <property type="match status" value="1"/>
</dbReference>
<dbReference type="Gene3D" id="2.30.30.100">
    <property type="match status" value="1"/>
</dbReference>
<dbReference type="HAMAP" id="MF_00436">
    <property type="entry name" value="Hfq"/>
    <property type="match status" value="1"/>
</dbReference>
<dbReference type="InterPro" id="IPR005001">
    <property type="entry name" value="Hfq"/>
</dbReference>
<dbReference type="InterPro" id="IPR010920">
    <property type="entry name" value="LSM_dom_sf"/>
</dbReference>
<dbReference type="InterPro" id="IPR047575">
    <property type="entry name" value="Sm"/>
</dbReference>
<dbReference type="NCBIfam" id="TIGR02383">
    <property type="entry name" value="Hfq"/>
    <property type="match status" value="1"/>
</dbReference>
<dbReference type="NCBIfam" id="NF001602">
    <property type="entry name" value="PRK00395.1"/>
    <property type="match status" value="1"/>
</dbReference>
<dbReference type="PANTHER" id="PTHR34772">
    <property type="entry name" value="RNA-BINDING PROTEIN HFQ"/>
    <property type="match status" value="1"/>
</dbReference>
<dbReference type="PANTHER" id="PTHR34772:SF1">
    <property type="entry name" value="RNA-BINDING PROTEIN HFQ"/>
    <property type="match status" value="1"/>
</dbReference>
<dbReference type="Pfam" id="PF17209">
    <property type="entry name" value="Hfq"/>
    <property type="match status" value="1"/>
</dbReference>
<dbReference type="SUPFAM" id="SSF50182">
    <property type="entry name" value="Sm-like ribonucleoproteins"/>
    <property type="match status" value="1"/>
</dbReference>
<dbReference type="PROSITE" id="PS52002">
    <property type="entry name" value="SM"/>
    <property type="match status" value="1"/>
</dbReference>
<feature type="chain" id="PRO_1000190363" description="RNA-binding protein Hfq">
    <location>
        <begin position="1"/>
        <end position="91"/>
    </location>
</feature>
<feature type="domain" description="Sm" evidence="2">
    <location>
        <begin position="9"/>
        <end position="68"/>
    </location>
</feature>
<proteinExistence type="inferred from homology"/>
<reference key="1">
    <citation type="submission" date="2008-06" db="EMBL/GenBank/DDBJ databases">
        <title>Complete sequence of Stenotrophomonas maltophilia R551-3.</title>
        <authorList>
            <consortium name="US DOE Joint Genome Institute"/>
            <person name="Lucas S."/>
            <person name="Copeland A."/>
            <person name="Lapidus A."/>
            <person name="Glavina del Rio T."/>
            <person name="Dalin E."/>
            <person name="Tice H."/>
            <person name="Pitluck S."/>
            <person name="Chain P."/>
            <person name="Malfatti S."/>
            <person name="Shin M."/>
            <person name="Vergez L."/>
            <person name="Lang D."/>
            <person name="Schmutz J."/>
            <person name="Larimer F."/>
            <person name="Land M."/>
            <person name="Hauser L."/>
            <person name="Kyrpides N."/>
            <person name="Mikhailova N."/>
            <person name="Taghavi S."/>
            <person name="Monchy S."/>
            <person name="Newman L."/>
            <person name="Vangronsveld J."/>
            <person name="van der Lelie D."/>
            <person name="Richardson P."/>
        </authorList>
    </citation>
    <scope>NUCLEOTIDE SEQUENCE [LARGE SCALE GENOMIC DNA]</scope>
    <source>
        <strain>R551-3</strain>
    </source>
</reference>
<name>HFQ_STRM5</name>
<protein>
    <recommendedName>
        <fullName evidence="1">RNA-binding protein Hfq</fullName>
    </recommendedName>
</protein>
<sequence>MSKGQSLQDPFLNALRRERVPVSVYLVNGIKLQGTIESFDQFVVLLRNTVSQMVYKHAISTVVPARNVKVGPGGGYVQSGEGGQAGDEADE</sequence>
<accession>B4SRA5</accession>
<evidence type="ECO:0000255" key="1">
    <source>
        <dbReference type="HAMAP-Rule" id="MF_00436"/>
    </source>
</evidence>
<evidence type="ECO:0000255" key="2">
    <source>
        <dbReference type="PROSITE-ProRule" id="PRU01346"/>
    </source>
</evidence>